<comment type="function">
    <text evidence="1">Catalyzes the reversible cyclization of carbamoyl aspartate to dihydroorotate.</text>
</comment>
<comment type="catalytic activity">
    <reaction evidence="1">
        <text>(S)-dihydroorotate + H2O = N-carbamoyl-L-aspartate + H(+)</text>
        <dbReference type="Rhea" id="RHEA:24296"/>
        <dbReference type="ChEBI" id="CHEBI:15377"/>
        <dbReference type="ChEBI" id="CHEBI:15378"/>
        <dbReference type="ChEBI" id="CHEBI:30864"/>
        <dbReference type="ChEBI" id="CHEBI:32814"/>
        <dbReference type="EC" id="3.5.2.3"/>
    </reaction>
</comment>
<comment type="cofactor">
    <cofactor evidence="1">
        <name>Zn(2+)</name>
        <dbReference type="ChEBI" id="CHEBI:29105"/>
    </cofactor>
    <text evidence="1">Binds 2 Zn(2+) ions per subunit.</text>
</comment>
<comment type="pathway">
    <text evidence="1">Pyrimidine metabolism; UMP biosynthesis via de novo pathway; (S)-dihydroorotate from bicarbonate: step 3/3.</text>
</comment>
<comment type="subunit">
    <text evidence="1">Homodimer.</text>
</comment>
<comment type="similarity">
    <text evidence="1">Belongs to the metallo-dependent hydrolases superfamily. DHOase family. Class II DHOase subfamily.</text>
</comment>
<organism>
    <name type="scientific">Yersinia pseudotuberculosis serotype O:1b (strain IP 31758)</name>
    <dbReference type="NCBI Taxonomy" id="349747"/>
    <lineage>
        <taxon>Bacteria</taxon>
        <taxon>Pseudomonadati</taxon>
        <taxon>Pseudomonadota</taxon>
        <taxon>Gammaproteobacteria</taxon>
        <taxon>Enterobacterales</taxon>
        <taxon>Yersiniaceae</taxon>
        <taxon>Yersinia</taxon>
    </lineage>
</organism>
<sequence>MTAQPQTLKIRRPDDWHIHLRDDEMLSTVLPYTSEVFARAIVMPNLAQPITTVASAIAYRERILAAVPVGHKFTPLMTCYLTNSLDVKELTTGFEQGVFTAAKLYPANATTNSTHGVSDIPAIYPLFEQMQKIGMPLLIHGEVTDAAVDIFDREARFIDQILEPIRQKFPELKIVFEHITTKDAADYVLAGNRFLGATVTPQHLMFNRNHMLVGGIRPHLFCLPILKRSTHQQALRAAVASGSDRFFLGTDSAPHAKHRKESSCGCAGVFNAPAALPAYASVFEELNALQHLEAFCALNGPRFYGLPVNDDVVELVRTPFLQPEEIPLGNESVIPFLAGQTLNWSVKR</sequence>
<gene>
    <name evidence="1" type="primary">pyrC</name>
    <name type="ordered locus">YpsIP31758_1567</name>
</gene>
<reference key="1">
    <citation type="journal article" date="2007" name="PLoS Genet.">
        <title>The complete genome sequence of Yersinia pseudotuberculosis IP31758, the causative agent of Far East scarlet-like fever.</title>
        <authorList>
            <person name="Eppinger M."/>
            <person name="Rosovitz M.J."/>
            <person name="Fricke W.F."/>
            <person name="Rasko D.A."/>
            <person name="Kokorina G."/>
            <person name="Fayolle C."/>
            <person name="Lindler L.E."/>
            <person name="Carniel E."/>
            <person name="Ravel J."/>
        </authorList>
    </citation>
    <scope>NUCLEOTIDE SEQUENCE [LARGE SCALE GENOMIC DNA]</scope>
    <source>
        <strain>IP 31758</strain>
    </source>
</reference>
<keyword id="KW-0378">Hydrolase</keyword>
<keyword id="KW-0479">Metal-binding</keyword>
<keyword id="KW-0665">Pyrimidine biosynthesis</keyword>
<keyword id="KW-0862">Zinc</keyword>
<protein>
    <recommendedName>
        <fullName evidence="1">Dihydroorotase</fullName>
        <shortName evidence="1">DHOase</shortName>
        <ecNumber evidence="1">3.5.2.3</ecNumber>
    </recommendedName>
</protein>
<evidence type="ECO:0000255" key="1">
    <source>
        <dbReference type="HAMAP-Rule" id="MF_00219"/>
    </source>
</evidence>
<accession>A7FH16</accession>
<feature type="chain" id="PRO_1000058652" description="Dihydroorotase">
    <location>
        <begin position="1"/>
        <end position="348"/>
    </location>
</feature>
<feature type="active site" evidence="1">
    <location>
        <position position="251"/>
    </location>
</feature>
<feature type="binding site" evidence="1">
    <location>
        <position position="17"/>
    </location>
    <ligand>
        <name>Zn(2+)</name>
        <dbReference type="ChEBI" id="CHEBI:29105"/>
        <label>1</label>
    </ligand>
</feature>
<feature type="binding site" evidence="1">
    <location>
        <begin position="19"/>
        <end position="21"/>
    </location>
    <ligand>
        <name>substrate</name>
    </ligand>
</feature>
<feature type="binding site" evidence="1">
    <location>
        <position position="19"/>
    </location>
    <ligand>
        <name>Zn(2+)</name>
        <dbReference type="ChEBI" id="CHEBI:29105"/>
        <label>1</label>
    </ligand>
</feature>
<feature type="binding site" evidence="1">
    <location>
        <position position="45"/>
    </location>
    <ligand>
        <name>substrate</name>
    </ligand>
</feature>
<feature type="binding site" description="via carbamate group" evidence="1">
    <location>
        <position position="103"/>
    </location>
    <ligand>
        <name>Zn(2+)</name>
        <dbReference type="ChEBI" id="CHEBI:29105"/>
        <label>1</label>
    </ligand>
</feature>
<feature type="binding site" description="via carbamate group" evidence="1">
    <location>
        <position position="103"/>
    </location>
    <ligand>
        <name>Zn(2+)</name>
        <dbReference type="ChEBI" id="CHEBI:29105"/>
        <label>2</label>
    </ligand>
</feature>
<feature type="binding site" evidence="1">
    <location>
        <position position="140"/>
    </location>
    <ligand>
        <name>substrate</name>
    </ligand>
</feature>
<feature type="binding site" evidence="1">
    <location>
        <position position="140"/>
    </location>
    <ligand>
        <name>Zn(2+)</name>
        <dbReference type="ChEBI" id="CHEBI:29105"/>
        <label>2</label>
    </ligand>
</feature>
<feature type="binding site" evidence="1">
    <location>
        <position position="178"/>
    </location>
    <ligand>
        <name>Zn(2+)</name>
        <dbReference type="ChEBI" id="CHEBI:29105"/>
        <label>2</label>
    </ligand>
</feature>
<feature type="binding site" evidence="1">
    <location>
        <position position="223"/>
    </location>
    <ligand>
        <name>substrate</name>
    </ligand>
</feature>
<feature type="binding site" evidence="1">
    <location>
        <position position="251"/>
    </location>
    <ligand>
        <name>Zn(2+)</name>
        <dbReference type="ChEBI" id="CHEBI:29105"/>
        <label>1</label>
    </ligand>
</feature>
<feature type="binding site" evidence="1">
    <location>
        <position position="255"/>
    </location>
    <ligand>
        <name>substrate</name>
    </ligand>
</feature>
<feature type="binding site" evidence="1">
    <location>
        <position position="267"/>
    </location>
    <ligand>
        <name>substrate</name>
    </ligand>
</feature>
<feature type="modified residue" description="N6-carboxylysine" evidence="1">
    <location>
        <position position="103"/>
    </location>
</feature>
<proteinExistence type="inferred from homology"/>
<name>PYRC_YERP3</name>
<dbReference type="EC" id="3.5.2.3" evidence="1"/>
<dbReference type="EMBL" id="CP000720">
    <property type="protein sequence ID" value="ABS47027.1"/>
    <property type="molecule type" value="Genomic_DNA"/>
</dbReference>
<dbReference type="RefSeq" id="WP_012104959.1">
    <property type="nucleotide sequence ID" value="NC_009708.1"/>
</dbReference>
<dbReference type="SMR" id="A7FH16"/>
<dbReference type="KEGG" id="ypi:YpsIP31758_1567"/>
<dbReference type="HOGENOM" id="CLU_041558_1_0_6"/>
<dbReference type="UniPathway" id="UPA00070">
    <property type="reaction ID" value="UER00117"/>
</dbReference>
<dbReference type="Proteomes" id="UP000002412">
    <property type="component" value="Chromosome"/>
</dbReference>
<dbReference type="GO" id="GO:0005829">
    <property type="term" value="C:cytosol"/>
    <property type="evidence" value="ECO:0007669"/>
    <property type="project" value="TreeGrafter"/>
</dbReference>
<dbReference type="GO" id="GO:0004151">
    <property type="term" value="F:dihydroorotase activity"/>
    <property type="evidence" value="ECO:0007669"/>
    <property type="project" value="UniProtKB-UniRule"/>
</dbReference>
<dbReference type="GO" id="GO:0008270">
    <property type="term" value="F:zinc ion binding"/>
    <property type="evidence" value="ECO:0007669"/>
    <property type="project" value="UniProtKB-UniRule"/>
</dbReference>
<dbReference type="GO" id="GO:0006207">
    <property type="term" value="P:'de novo' pyrimidine nucleobase biosynthetic process"/>
    <property type="evidence" value="ECO:0007669"/>
    <property type="project" value="TreeGrafter"/>
</dbReference>
<dbReference type="GO" id="GO:0044205">
    <property type="term" value="P:'de novo' UMP biosynthetic process"/>
    <property type="evidence" value="ECO:0007669"/>
    <property type="project" value="UniProtKB-UniRule"/>
</dbReference>
<dbReference type="CDD" id="cd01294">
    <property type="entry name" value="DHOase"/>
    <property type="match status" value="1"/>
</dbReference>
<dbReference type="FunFam" id="3.20.20.140:FF:000006">
    <property type="entry name" value="Dihydroorotase"/>
    <property type="match status" value="1"/>
</dbReference>
<dbReference type="Gene3D" id="3.20.20.140">
    <property type="entry name" value="Metal-dependent hydrolases"/>
    <property type="match status" value="1"/>
</dbReference>
<dbReference type="HAMAP" id="MF_00219">
    <property type="entry name" value="PyrC_classII"/>
    <property type="match status" value="1"/>
</dbReference>
<dbReference type="InterPro" id="IPR006680">
    <property type="entry name" value="Amidohydro-rel"/>
</dbReference>
<dbReference type="InterPro" id="IPR004721">
    <property type="entry name" value="DHOdimr"/>
</dbReference>
<dbReference type="InterPro" id="IPR002195">
    <property type="entry name" value="Dihydroorotase_CS"/>
</dbReference>
<dbReference type="InterPro" id="IPR032466">
    <property type="entry name" value="Metal_Hydrolase"/>
</dbReference>
<dbReference type="NCBIfam" id="TIGR00856">
    <property type="entry name" value="pyrC_dimer"/>
    <property type="match status" value="1"/>
</dbReference>
<dbReference type="PANTHER" id="PTHR43137">
    <property type="entry name" value="DIHYDROOROTASE"/>
    <property type="match status" value="1"/>
</dbReference>
<dbReference type="PANTHER" id="PTHR43137:SF1">
    <property type="entry name" value="DIHYDROOROTASE"/>
    <property type="match status" value="1"/>
</dbReference>
<dbReference type="Pfam" id="PF01979">
    <property type="entry name" value="Amidohydro_1"/>
    <property type="match status" value="1"/>
</dbReference>
<dbReference type="PIRSF" id="PIRSF001237">
    <property type="entry name" value="DHOdimr"/>
    <property type="match status" value="1"/>
</dbReference>
<dbReference type="SUPFAM" id="SSF51556">
    <property type="entry name" value="Metallo-dependent hydrolases"/>
    <property type="match status" value="1"/>
</dbReference>
<dbReference type="PROSITE" id="PS00483">
    <property type="entry name" value="DIHYDROOROTASE_2"/>
    <property type="match status" value="1"/>
</dbReference>